<name>DEXHC_ARATH</name>
<reference key="1">
    <citation type="journal article" date="2000" name="Nature">
        <title>Sequence and analysis of chromosome 1 of the plant Arabidopsis thaliana.</title>
        <authorList>
            <person name="Theologis A."/>
            <person name="Ecker J.R."/>
            <person name="Palm C.J."/>
            <person name="Federspiel N.A."/>
            <person name="Kaul S."/>
            <person name="White O."/>
            <person name="Alonso J."/>
            <person name="Altafi H."/>
            <person name="Araujo R."/>
            <person name="Bowman C.L."/>
            <person name="Brooks S.Y."/>
            <person name="Buehler E."/>
            <person name="Chan A."/>
            <person name="Chao Q."/>
            <person name="Chen H."/>
            <person name="Cheuk R.F."/>
            <person name="Chin C.W."/>
            <person name="Chung M.K."/>
            <person name="Conn L."/>
            <person name="Conway A.B."/>
            <person name="Conway A.R."/>
            <person name="Creasy T.H."/>
            <person name="Dewar K."/>
            <person name="Dunn P."/>
            <person name="Etgu P."/>
            <person name="Feldblyum T.V."/>
            <person name="Feng J.-D."/>
            <person name="Fong B."/>
            <person name="Fujii C.Y."/>
            <person name="Gill J.E."/>
            <person name="Goldsmith A.D."/>
            <person name="Haas B."/>
            <person name="Hansen N.F."/>
            <person name="Hughes B."/>
            <person name="Huizar L."/>
            <person name="Hunter J.L."/>
            <person name="Jenkins J."/>
            <person name="Johnson-Hopson C."/>
            <person name="Khan S."/>
            <person name="Khaykin E."/>
            <person name="Kim C.J."/>
            <person name="Koo H.L."/>
            <person name="Kremenetskaia I."/>
            <person name="Kurtz D.B."/>
            <person name="Kwan A."/>
            <person name="Lam B."/>
            <person name="Langin-Hooper S."/>
            <person name="Lee A."/>
            <person name="Lee J.M."/>
            <person name="Lenz C.A."/>
            <person name="Li J.H."/>
            <person name="Li Y.-P."/>
            <person name="Lin X."/>
            <person name="Liu S.X."/>
            <person name="Liu Z.A."/>
            <person name="Luros J.S."/>
            <person name="Maiti R."/>
            <person name="Marziali A."/>
            <person name="Militscher J."/>
            <person name="Miranda M."/>
            <person name="Nguyen M."/>
            <person name="Nierman W.C."/>
            <person name="Osborne B.I."/>
            <person name="Pai G."/>
            <person name="Peterson J."/>
            <person name="Pham P.K."/>
            <person name="Rizzo M."/>
            <person name="Rooney T."/>
            <person name="Rowley D."/>
            <person name="Sakano H."/>
            <person name="Salzberg S.L."/>
            <person name="Schwartz J.R."/>
            <person name="Shinn P."/>
            <person name="Southwick A.M."/>
            <person name="Sun H."/>
            <person name="Tallon L.J."/>
            <person name="Tambunga G."/>
            <person name="Toriumi M.J."/>
            <person name="Town C.D."/>
            <person name="Utterback T."/>
            <person name="Van Aken S."/>
            <person name="Vaysberg M."/>
            <person name="Vysotskaia V.S."/>
            <person name="Walker M."/>
            <person name="Wu D."/>
            <person name="Yu G."/>
            <person name="Fraser C.M."/>
            <person name="Venter J.C."/>
            <person name="Davis R.W."/>
        </authorList>
    </citation>
    <scope>NUCLEOTIDE SEQUENCE [LARGE SCALE GENOMIC DNA]</scope>
    <source>
        <strain>cv. Columbia</strain>
    </source>
</reference>
<reference key="2">
    <citation type="journal article" date="2017" name="Plant J.">
        <title>Araport11: a complete reannotation of the Arabidopsis thaliana reference genome.</title>
        <authorList>
            <person name="Cheng C.Y."/>
            <person name="Krishnakumar V."/>
            <person name="Chan A.P."/>
            <person name="Thibaud-Nissen F."/>
            <person name="Schobel S."/>
            <person name="Town C.D."/>
        </authorList>
    </citation>
    <scope>GENOME REANNOTATION</scope>
    <source>
        <strain>cv. Columbia</strain>
    </source>
</reference>
<reference key="3">
    <citation type="journal article" date="2003" name="Science">
        <title>Empirical analysis of transcriptional activity in the Arabidopsis genome.</title>
        <authorList>
            <person name="Yamada K."/>
            <person name="Lim J."/>
            <person name="Dale J.M."/>
            <person name="Chen H."/>
            <person name="Shinn P."/>
            <person name="Palm C.J."/>
            <person name="Southwick A.M."/>
            <person name="Wu H.C."/>
            <person name="Kim C.J."/>
            <person name="Nguyen M."/>
            <person name="Pham P.K."/>
            <person name="Cheuk R.F."/>
            <person name="Karlin-Newmann G."/>
            <person name="Liu S.X."/>
            <person name="Lam B."/>
            <person name="Sakano H."/>
            <person name="Wu T."/>
            <person name="Yu G."/>
            <person name="Miranda M."/>
            <person name="Quach H.L."/>
            <person name="Tripp M."/>
            <person name="Chang C.H."/>
            <person name="Lee J.M."/>
            <person name="Toriumi M.J."/>
            <person name="Chan M.M."/>
            <person name="Tang C.C."/>
            <person name="Onodera C.S."/>
            <person name="Deng J.M."/>
            <person name="Akiyama K."/>
            <person name="Ansari Y."/>
            <person name="Arakawa T."/>
            <person name="Banh J."/>
            <person name="Banno F."/>
            <person name="Bowser L."/>
            <person name="Brooks S.Y."/>
            <person name="Carninci P."/>
            <person name="Chao Q."/>
            <person name="Choy N."/>
            <person name="Enju A."/>
            <person name="Goldsmith A.D."/>
            <person name="Gurjal M."/>
            <person name="Hansen N.F."/>
            <person name="Hayashizaki Y."/>
            <person name="Johnson-Hopson C."/>
            <person name="Hsuan V.W."/>
            <person name="Iida K."/>
            <person name="Karnes M."/>
            <person name="Khan S."/>
            <person name="Koesema E."/>
            <person name="Ishida J."/>
            <person name="Jiang P.X."/>
            <person name="Jones T."/>
            <person name="Kawai J."/>
            <person name="Kamiya A."/>
            <person name="Meyers C."/>
            <person name="Nakajima M."/>
            <person name="Narusaka M."/>
            <person name="Seki M."/>
            <person name="Sakurai T."/>
            <person name="Satou M."/>
            <person name="Tamse R."/>
            <person name="Vaysberg M."/>
            <person name="Wallender E.K."/>
            <person name="Wong C."/>
            <person name="Yamamura Y."/>
            <person name="Yuan S."/>
            <person name="Shinozaki K."/>
            <person name="Davis R.W."/>
            <person name="Theologis A."/>
            <person name="Ecker J.R."/>
        </authorList>
    </citation>
    <scope>NUCLEOTIDE SEQUENCE [LARGE SCALE MRNA] OF 1600-2171</scope>
    <source>
        <strain>cv. Columbia</strain>
    </source>
</reference>
<reference key="4">
    <citation type="submission" date="2005-03" db="EMBL/GenBank/DDBJ databases">
        <title>Large-scale analysis of RIKEN Arabidopsis full-length (RAFL) cDNAs.</title>
        <authorList>
            <person name="Totoki Y."/>
            <person name="Seki M."/>
            <person name="Ishida J."/>
            <person name="Nakajima M."/>
            <person name="Enju A."/>
            <person name="Kamiya A."/>
            <person name="Narusaka M."/>
            <person name="Shin-i T."/>
            <person name="Nakagawa M."/>
            <person name="Sakamoto N."/>
            <person name="Oishi K."/>
            <person name="Kohara Y."/>
            <person name="Kobayashi M."/>
            <person name="Toyoda A."/>
            <person name="Sakaki Y."/>
            <person name="Sakurai T."/>
            <person name="Iida K."/>
            <person name="Akiyama K."/>
            <person name="Satou M."/>
            <person name="Toyoda T."/>
            <person name="Konagaya A."/>
            <person name="Carninci P."/>
            <person name="Kawai J."/>
            <person name="Hayashizaki Y."/>
            <person name="Shinozaki K."/>
        </authorList>
    </citation>
    <scope>NUCLEOTIDE SEQUENCE [LARGE SCALE MRNA] OF 2122-2171</scope>
    <source>
        <strain>cv. Columbia</strain>
    </source>
</reference>
<reference key="5">
    <citation type="journal article" date="2004" name="Plant Physiol.">
        <title>Identification of genes required for embryo development in Arabidopsis.</title>
        <authorList>
            <person name="Tzafrir I."/>
            <person name="Pena-Muralla R."/>
            <person name="Dickerman A."/>
            <person name="Berg M."/>
            <person name="Rogers R."/>
            <person name="Hutchens S."/>
            <person name="Sweeney T.C."/>
            <person name="McElver J."/>
            <person name="Aux G."/>
            <person name="Patton D."/>
            <person name="Meinke D."/>
        </authorList>
    </citation>
    <scope>IDENTIFICATION</scope>
    <scope>DISRUPTION PHENOTYPE</scope>
</reference>
<reference key="6">
    <citation type="journal article" date="2013" name="PLoS ONE">
        <title>Genome-wide comparative in silico analysis of the RNA helicase gene family in Zea mays and Glycine max: a comparison with Arabidopsis and Oryza sativa.</title>
        <authorList>
            <person name="Xu R."/>
            <person name="Zhang S."/>
            <person name="Huang J."/>
            <person name="Zheng C."/>
        </authorList>
    </citation>
    <scope>GENE FAMILY</scope>
</reference>
<reference key="7">
    <citation type="journal article" date="2009" name="J. Integr. Plant Biol.">
        <title>GAMETOPHYTIC FACTOR 1, involved in pre-mRNA splicing, is essential for megagametogenesis and embryogenesis in Arabidopsis.</title>
        <authorList>
            <person name="Liu M."/>
            <person name="Yuan L."/>
            <person name="Liu N.Y."/>
            <person name="Shi D.Q."/>
            <person name="Liu J."/>
            <person name="Yang W.C."/>
        </authorList>
    </citation>
    <scope>INTERACTION WITH CLO</scope>
</reference>
<organism>
    <name type="scientific">Arabidopsis thaliana</name>
    <name type="common">Mouse-ear cress</name>
    <dbReference type="NCBI Taxonomy" id="3702"/>
    <lineage>
        <taxon>Eukaryota</taxon>
        <taxon>Viridiplantae</taxon>
        <taxon>Streptophyta</taxon>
        <taxon>Embryophyta</taxon>
        <taxon>Tracheophyta</taxon>
        <taxon>Spermatophyta</taxon>
        <taxon>Magnoliopsida</taxon>
        <taxon>eudicotyledons</taxon>
        <taxon>Gunneridae</taxon>
        <taxon>Pentapetalae</taxon>
        <taxon>rosids</taxon>
        <taxon>malvids</taxon>
        <taxon>Brassicales</taxon>
        <taxon>Brassicaceae</taxon>
        <taxon>Camelineae</taxon>
        <taxon>Arabidopsis</taxon>
    </lineage>
</organism>
<proteinExistence type="evidence at protein level"/>
<evidence type="ECO:0000250" key="1">
    <source>
        <dbReference type="UniProtKB" id="P32639"/>
    </source>
</evidence>
<evidence type="ECO:0000255" key="2"/>
<evidence type="ECO:0000255" key="3">
    <source>
        <dbReference type="PROSITE-ProRule" id="PRU00541"/>
    </source>
</evidence>
<evidence type="ECO:0000255" key="4">
    <source>
        <dbReference type="PROSITE-ProRule" id="PRU00542"/>
    </source>
</evidence>
<evidence type="ECO:0000256" key="5">
    <source>
        <dbReference type="SAM" id="MobiDB-lite"/>
    </source>
</evidence>
<evidence type="ECO:0000269" key="6">
    <source>
    </source>
</evidence>
<evidence type="ECO:0000269" key="7">
    <source>
    </source>
</evidence>
<evidence type="ECO:0000303" key="8">
    <source>
    </source>
</evidence>
<evidence type="ECO:0000303" key="9">
    <source>
    </source>
</evidence>
<evidence type="ECO:0000305" key="10"/>
<evidence type="ECO:0000312" key="11">
    <source>
        <dbReference type="Araport" id="AT1G20960"/>
    </source>
</evidence>
<evidence type="ECO:0000312" key="12">
    <source>
        <dbReference type="EMBL" id="AAD30595.1"/>
    </source>
</evidence>
<sequence>MANLGGGAEAHARFKQYEYRANSSLVLTTDNRPRDTHEPTGEPETLWGKIDPRSFGDRVAKGRPQELEDKLKKSKKKERDVVDDMVNIRQSKRRRLREESVLTDTDDAVYQPKTKETRAAYEAMLGLIQKQLGGQPPSIVSGAADEILAVLKNDAFRNPEKKMEIEKLLNKIENHEFDQLVSIGKLITDFQEGGDSGGGRANDDEGLDDDLGVAVEFEENEEDDEESDPDMVEEDDDEEDDEPTRTGGMQVDAGINDEDAGDANEGTNLNVQDIDAYWLQRKISQAYEQQIDPQQCQVLAEELLKILAEGDDRVVEDKLLMHLQYEKFSLVKFLLRNRLKVVWCTRLARAEDQEERNRIEEEMRGLGPELTAIVEQLHATRATAKEREENLQKSINEEARRLKDETGGDGGRGRRDVADRDSESGWVKGQRQMLDLESLAFDQGGLLMANKKCDLPPGSYRSHGKGYDEVHVPWVSKKVDRNEKLVKITEMPDWAQPAFKGMQQLNRVQSKVYDTALFKAENILLCAPTGAGKTNVAMLTILQQLEMNRNTDGTYNHGDYKIVYVAPMKALVAEVVGNLSNRLKDYGVIVRELSGDQSLTGREIEETQIIVTTPEKWDIITRKSGDRTYTQLVRLLIIDEIHLLHDNRGPVLESIVARTLRQIETTKENIRLVGLSATLPNYEDVALFLRVDLKKGLFKFDRSYRPVPLHQQYIGISVKKPLQRFQLMNDLCYQKVLAGAGKHQVLIFVHSRKETSKTARAIRDTAMANDTLSRFLKEDSVTRDVLHSHEDIVKNSDLKDILPYGFAIHHAGLSRGDREIVETLFSQGHVQVLVSTATLAWGVNLPAHTVIIKGTQVYNPEKGAWMELSPLDVMQMLGRAGRPQYDQHGEGIIITGYSELQYYLSLMNEQLPIESQFISKLADQLNAEIVLGTVQNAREACHWLGYTYLYIRMVRNPTLYGLAPDALAKDVVLEERRADLIHSAATILDKNNLVKYDRKSGYFQVTDLGRIASYYYITHGTIATYNEHLKPTMGDIDLYRLFSLSDEFKYVTVRQDEKMELAKLLDRVPIPIKETLEEPSAKINVLLQAYISQLKLEGLSLTSDMVYITQSAGRLVRALYEIVLKRGWAQLAEKALNLSKMVGKRMWSVQTPLRQFHGLSNDILMQLEKKDLVWERYYDLSAQELGELIRSPKMGKPLHKFIHQFPKVTLSAHVQPITRTVLNVELTVTPDFLWDEKIHKYVEPFWIIVEDNDGEKILHHEYFLLKKQYIDEDHTLHFTVPIFEPLPPQYFVRVVSDKWLGSETVLPVSFRHLILPEKYPPPTELLDLQPLPVTALRNPNYEILYQDFKHFNPVQTQVFTVLYNTNDNVLVAAPTGSGKTICAEFAILRNHHEGPDATMRVVYIAPLEAIAKEQFRIWEGKFGKGLGLRVVELTGETALDLKLLEKGQIIISTPEKWDALSRRWKQRKYVQQVSLFIVDELHLIGGQHGPVLEVIVSRMRYISSQVINKIRIVALSTSLANAKDLGEWIGASSHGLFNFPPGVRPVPLEIHIQGVDISSFEARMQAMTKPTYTAIVQHAKNKKPAIVFVPTRKHVRLTAVDLMAYSHMDNPQSPDFLLGKLEELDPFVEQIREETLKETLCHGIGYLHEGLSSLDQEIVTQLFEAGRIQVCVMSSSLCWGTPLTAHLVVVMGTQYYDGRENSHSDYPVPDLLQMMGRASRPLLDNAGKCVIFCHAPRKEYYKKFLYEAFPVESQLQHFLHDNFNAEVVAGVIENKQDAVDYLTWTFMYRRLPQNPNYYNLQGVSHRHLSDHLSELVENTLSDLEASKCIEVEDEMELSPLNLGMIASYYYISYTTIERFSSLLSSKTKMKGLLEILTSASEYDMIPIRPGEEDTVRRLINHQRFSFENPKCTDPHVKANALLQAHFSRQNIGGNLAMDQRDVLLSATRLLQAMVDVISSNGWLNLALLAMEVSQMVTQGMWERDSMLLQLPHFTKDLAKRCQENPGKNIETVFDLVEMEDEERQELLKMSDAQLLDIARFCNRFPNIDLTYEIVGSEEVNPGKEVTLQVMLERDMEGRTEVGPVDSLRYPKTKEEGWWLVVGDTKTNQLLAIKRVSLQRKVKVKLDFTAPSEPGEKSYTLYFMCDSYLGCDQEYSFSVDVKGSGAGDRMEE</sequence>
<keyword id="KW-0067">ATP-binding</keyword>
<keyword id="KW-0347">Helicase</keyword>
<keyword id="KW-0378">Hydrolase</keyword>
<keyword id="KW-0507">mRNA processing</keyword>
<keyword id="KW-0508">mRNA splicing</keyword>
<keyword id="KW-0547">Nucleotide-binding</keyword>
<keyword id="KW-0539">Nucleus</keyword>
<keyword id="KW-1185">Reference proteome</keyword>
<keyword id="KW-0677">Repeat</keyword>
<keyword id="KW-0694">RNA-binding</keyword>
<keyword id="KW-0747">Spliceosome</keyword>
<accession>Q9SYP1</accession>
<accession>Q56Z02</accession>
<accession>Q8W577</accession>
<dbReference type="EC" id="3.6.4.13" evidence="10"/>
<dbReference type="EMBL" id="AC007369">
    <property type="protein sequence ID" value="AAD30595.1"/>
    <property type="molecule type" value="Genomic_DNA"/>
</dbReference>
<dbReference type="EMBL" id="CP002684">
    <property type="protein sequence ID" value="AEE30046.1"/>
    <property type="molecule type" value="Genomic_DNA"/>
</dbReference>
<dbReference type="EMBL" id="CP002684">
    <property type="protein sequence ID" value="AEE30047.1"/>
    <property type="molecule type" value="Genomic_DNA"/>
</dbReference>
<dbReference type="EMBL" id="AF419583">
    <property type="protein sequence ID" value="AAL31915.1"/>
    <property type="status" value="ALT_INIT"/>
    <property type="molecule type" value="mRNA"/>
</dbReference>
<dbReference type="EMBL" id="AY113040">
    <property type="protein sequence ID" value="AAM47348.1"/>
    <property type="molecule type" value="mRNA"/>
</dbReference>
<dbReference type="EMBL" id="AK221168">
    <property type="protein sequence ID" value="BAD95221.1"/>
    <property type="molecule type" value="mRNA"/>
</dbReference>
<dbReference type="PIR" id="E86342">
    <property type="entry name" value="E86342"/>
</dbReference>
<dbReference type="RefSeq" id="NP_001185050.1">
    <property type="nucleotide sequence ID" value="NM_001198121.1"/>
</dbReference>
<dbReference type="RefSeq" id="NP_173520.1">
    <property type="nucleotide sequence ID" value="NM_101949.5"/>
</dbReference>
<dbReference type="SMR" id="Q9SYP1"/>
<dbReference type="FunCoup" id="Q9SYP1">
    <property type="interactions" value="4601"/>
</dbReference>
<dbReference type="IntAct" id="Q9SYP1">
    <property type="interactions" value="6"/>
</dbReference>
<dbReference type="MINT" id="Q9SYP1"/>
<dbReference type="STRING" id="3702.Q9SYP1"/>
<dbReference type="iPTMnet" id="Q9SYP1"/>
<dbReference type="PaxDb" id="3702-AT1G20960.1"/>
<dbReference type="ProteomicsDB" id="224623"/>
<dbReference type="EnsemblPlants" id="AT1G20960.1">
    <property type="protein sequence ID" value="AT1G20960.1"/>
    <property type="gene ID" value="AT1G20960"/>
</dbReference>
<dbReference type="EnsemblPlants" id="AT1G20960.2">
    <property type="protein sequence ID" value="AT1G20960.2"/>
    <property type="gene ID" value="AT1G20960"/>
</dbReference>
<dbReference type="GeneID" id="838690"/>
<dbReference type="Gramene" id="AT1G20960.1">
    <property type="protein sequence ID" value="AT1G20960.1"/>
    <property type="gene ID" value="AT1G20960"/>
</dbReference>
<dbReference type="Gramene" id="AT1G20960.2">
    <property type="protein sequence ID" value="AT1G20960.2"/>
    <property type="gene ID" value="AT1G20960"/>
</dbReference>
<dbReference type="KEGG" id="ath:AT1G20960"/>
<dbReference type="Araport" id="AT1G20960"/>
<dbReference type="TAIR" id="AT1G20960">
    <property type="gene designation" value="EMB1507"/>
</dbReference>
<dbReference type="eggNOG" id="KOG0951">
    <property type="taxonomic scope" value="Eukaryota"/>
</dbReference>
<dbReference type="HOGENOM" id="CLU_000335_1_0_1"/>
<dbReference type="InParanoid" id="Q9SYP1"/>
<dbReference type="OMA" id="MNPKEFN"/>
<dbReference type="PhylomeDB" id="Q9SYP1"/>
<dbReference type="CD-CODE" id="4299E36E">
    <property type="entry name" value="Nucleolus"/>
</dbReference>
<dbReference type="PRO" id="PR:Q9SYP1"/>
<dbReference type="Proteomes" id="UP000006548">
    <property type="component" value="Chromosome 1"/>
</dbReference>
<dbReference type="ExpressionAtlas" id="Q9SYP1">
    <property type="expression patterns" value="baseline and differential"/>
</dbReference>
<dbReference type="GO" id="GO:0005730">
    <property type="term" value="C:nucleolus"/>
    <property type="evidence" value="ECO:0007005"/>
    <property type="project" value="TAIR"/>
</dbReference>
<dbReference type="GO" id="GO:0005634">
    <property type="term" value="C:nucleus"/>
    <property type="evidence" value="ECO:0007005"/>
    <property type="project" value="TAIR"/>
</dbReference>
<dbReference type="GO" id="GO:0005681">
    <property type="term" value="C:spliceosomal complex"/>
    <property type="evidence" value="ECO:0007669"/>
    <property type="project" value="UniProtKB-KW"/>
</dbReference>
<dbReference type="GO" id="GO:0005524">
    <property type="term" value="F:ATP binding"/>
    <property type="evidence" value="ECO:0007669"/>
    <property type="project" value="UniProtKB-KW"/>
</dbReference>
<dbReference type="GO" id="GO:0016887">
    <property type="term" value="F:ATP hydrolysis activity"/>
    <property type="evidence" value="ECO:0007669"/>
    <property type="project" value="InterPro"/>
</dbReference>
<dbReference type="GO" id="GO:0003723">
    <property type="term" value="F:RNA binding"/>
    <property type="evidence" value="ECO:0007669"/>
    <property type="project" value="UniProtKB-KW"/>
</dbReference>
<dbReference type="GO" id="GO:0003724">
    <property type="term" value="F:RNA helicase activity"/>
    <property type="evidence" value="ECO:0007669"/>
    <property type="project" value="UniProtKB-EC"/>
</dbReference>
<dbReference type="GO" id="GO:0006397">
    <property type="term" value="P:mRNA processing"/>
    <property type="evidence" value="ECO:0000315"/>
    <property type="project" value="TAIR"/>
</dbReference>
<dbReference type="GO" id="GO:0008380">
    <property type="term" value="P:RNA splicing"/>
    <property type="evidence" value="ECO:0007669"/>
    <property type="project" value="UniProtKB-KW"/>
</dbReference>
<dbReference type="GO" id="GO:0010228">
    <property type="term" value="P:vegetative to reproductive phase transition of meristem"/>
    <property type="evidence" value="ECO:0000315"/>
    <property type="project" value="TAIR"/>
</dbReference>
<dbReference type="CDD" id="cd18019">
    <property type="entry name" value="DEXHc_Brr2_1"/>
    <property type="match status" value="1"/>
</dbReference>
<dbReference type="CDD" id="cd18021">
    <property type="entry name" value="DEXHc_Brr2_2"/>
    <property type="match status" value="1"/>
</dbReference>
<dbReference type="CDD" id="cd18795">
    <property type="entry name" value="SF2_C_Ski2"/>
    <property type="match status" value="2"/>
</dbReference>
<dbReference type="FunFam" id="1.10.3380.10:FF:000010">
    <property type="entry name" value="DExH-box ATP-dependent RNA helicase DExH12"/>
    <property type="match status" value="1"/>
</dbReference>
<dbReference type="FunFam" id="2.60.40.150:FF:000004">
    <property type="entry name" value="RNA helicase, activating signal cointegrator 1"/>
    <property type="match status" value="1"/>
</dbReference>
<dbReference type="FunFam" id="3.40.50.300:FF:000102">
    <property type="entry name" value="RNA helicase, activating signal cointegrator 1"/>
    <property type="match status" value="1"/>
</dbReference>
<dbReference type="FunFam" id="2.60.40.150:FF:000048">
    <property type="entry name" value="U5 small nuclear ribonucleoprotein 200 kDa helicase"/>
    <property type="match status" value="1"/>
</dbReference>
<dbReference type="FunFam" id="3.40.50.300:FF:000368">
    <property type="entry name" value="U5 small nuclear ribonucleoprotein 200 kDa helicase"/>
    <property type="match status" value="1"/>
</dbReference>
<dbReference type="FunFam" id="1.10.10.10:FF:000012">
    <property type="entry name" value="U5 small nuclear ribonucleoprotein helicase"/>
    <property type="match status" value="1"/>
</dbReference>
<dbReference type="FunFam" id="1.10.10.10:FF:000024">
    <property type="entry name" value="U5 small nuclear ribonucleoprotein helicase"/>
    <property type="match status" value="1"/>
</dbReference>
<dbReference type="FunFam" id="1.10.150.20:FF:000004">
    <property type="entry name" value="U5 small nuclear ribonucleoprotein helicase"/>
    <property type="match status" value="1"/>
</dbReference>
<dbReference type="FunFam" id="1.10.3380.10:FF:000001">
    <property type="entry name" value="U5 small nuclear ribonucleoprotein helicase"/>
    <property type="match status" value="1"/>
</dbReference>
<dbReference type="FunFam" id="3.40.50.300:FF:000062">
    <property type="entry name" value="U5 small nuclear ribonucleoprotein helicase"/>
    <property type="match status" value="1"/>
</dbReference>
<dbReference type="FunFam" id="3.40.50.300:FF:000254">
    <property type="entry name" value="U5 small nuclear ribonucleoprotein helicase"/>
    <property type="match status" value="1"/>
</dbReference>
<dbReference type="FunFam" id="1.10.150.20:FF:000013">
    <property type="entry name" value="U5 small nuclear ribonucleoprotein kDa helicase"/>
    <property type="match status" value="1"/>
</dbReference>
<dbReference type="Gene3D" id="1.10.150.20">
    <property type="entry name" value="5' to 3' exonuclease, C-terminal subdomain"/>
    <property type="match status" value="2"/>
</dbReference>
<dbReference type="Gene3D" id="2.60.40.150">
    <property type="entry name" value="C2 domain"/>
    <property type="match status" value="2"/>
</dbReference>
<dbReference type="Gene3D" id="3.40.50.300">
    <property type="entry name" value="P-loop containing nucleotide triphosphate hydrolases"/>
    <property type="match status" value="4"/>
</dbReference>
<dbReference type="Gene3D" id="1.10.3380.10">
    <property type="entry name" value="Sec63 N-terminal domain-like domain"/>
    <property type="match status" value="2"/>
</dbReference>
<dbReference type="Gene3D" id="1.10.10.10">
    <property type="entry name" value="Winged helix-like DNA-binding domain superfamily/Winged helix DNA-binding domain"/>
    <property type="match status" value="2"/>
</dbReference>
<dbReference type="InterPro" id="IPR003593">
    <property type="entry name" value="AAA+_ATPase"/>
</dbReference>
<dbReference type="InterPro" id="IPR041094">
    <property type="entry name" value="Brr2_helicase_PWI"/>
</dbReference>
<dbReference type="InterPro" id="IPR048863">
    <property type="entry name" value="BRR2_plug"/>
</dbReference>
<dbReference type="InterPro" id="IPR035892">
    <property type="entry name" value="C2_domain_sf"/>
</dbReference>
<dbReference type="InterPro" id="IPR011545">
    <property type="entry name" value="DEAD/DEAH_box_helicase_dom"/>
</dbReference>
<dbReference type="InterPro" id="IPR050474">
    <property type="entry name" value="Hel308_SKI2-like"/>
</dbReference>
<dbReference type="InterPro" id="IPR014001">
    <property type="entry name" value="Helicase_ATP-bd"/>
</dbReference>
<dbReference type="InterPro" id="IPR001650">
    <property type="entry name" value="Helicase_C-like"/>
</dbReference>
<dbReference type="InterPro" id="IPR014756">
    <property type="entry name" value="Ig_E-set"/>
</dbReference>
<dbReference type="InterPro" id="IPR027417">
    <property type="entry name" value="P-loop_NTPase"/>
</dbReference>
<dbReference type="InterPro" id="IPR004179">
    <property type="entry name" value="Sec63-dom"/>
</dbReference>
<dbReference type="InterPro" id="IPR036388">
    <property type="entry name" value="WH-like_DNA-bd_sf"/>
</dbReference>
<dbReference type="InterPro" id="IPR036390">
    <property type="entry name" value="WH_DNA-bd_sf"/>
</dbReference>
<dbReference type="PANTHER" id="PTHR47961:SF4">
    <property type="entry name" value="ACTIVATING SIGNAL COINTEGRATOR 1 COMPLEX SUBUNIT 3"/>
    <property type="match status" value="1"/>
</dbReference>
<dbReference type="PANTHER" id="PTHR47961">
    <property type="entry name" value="DNA POLYMERASE THETA, PUTATIVE (AFU_ORTHOLOGUE AFUA_1G05260)-RELATED"/>
    <property type="match status" value="1"/>
</dbReference>
<dbReference type="Pfam" id="PF21188">
    <property type="entry name" value="BRR2_plug"/>
    <property type="match status" value="1"/>
</dbReference>
<dbReference type="Pfam" id="PF00270">
    <property type="entry name" value="DEAD"/>
    <property type="match status" value="2"/>
</dbReference>
<dbReference type="Pfam" id="PF00271">
    <property type="entry name" value="Helicase_C"/>
    <property type="match status" value="1"/>
</dbReference>
<dbReference type="Pfam" id="PF18149">
    <property type="entry name" value="Helicase_PWI"/>
    <property type="match status" value="1"/>
</dbReference>
<dbReference type="Pfam" id="PF02889">
    <property type="entry name" value="Sec63"/>
    <property type="match status" value="2"/>
</dbReference>
<dbReference type="Pfam" id="PF23445">
    <property type="entry name" value="SNRNP200_wHTH"/>
    <property type="match status" value="2"/>
</dbReference>
<dbReference type="PIRSF" id="PIRSF039073">
    <property type="entry name" value="BRR2"/>
    <property type="match status" value="1"/>
</dbReference>
<dbReference type="SMART" id="SM00382">
    <property type="entry name" value="AAA"/>
    <property type="match status" value="2"/>
</dbReference>
<dbReference type="SMART" id="SM00487">
    <property type="entry name" value="DEXDc"/>
    <property type="match status" value="2"/>
</dbReference>
<dbReference type="SMART" id="SM00490">
    <property type="entry name" value="HELICc"/>
    <property type="match status" value="2"/>
</dbReference>
<dbReference type="SMART" id="SM00973">
    <property type="entry name" value="Sec63"/>
    <property type="match status" value="2"/>
</dbReference>
<dbReference type="SUPFAM" id="SSF81296">
    <property type="entry name" value="E set domains"/>
    <property type="match status" value="1"/>
</dbReference>
<dbReference type="SUPFAM" id="SSF52540">
    <property type="entry name" value="P-loop containing nucleoside triphosphate hydrolases"/>
    <property type="match status" value="4"/>
</dbReference>
<dbReference type="SUPFAM" id="SSF158702">
    <property type="entry name" value="Sec63 N-terminal domain-like"/>
    <property type="match status" value="2"/>
</dbReference>
<dbReference type="SUPFAM" id="SSF46785">
    <property type="entry name" value="Winged helix' DNA-binding domain"/>
    <property type="match status" value="2"/>
</dbReference>
<dbReference type="PROSITE" id="PS51192">
    <property type="entry name" value="HELICASE_ATP_BIND_1"/>
    <property type="match status" value="2"/>
</dbReference>
<dbReference type="PROSITE" id="PS51194">
    <property type="entry name" value="HELICASE_CTER"/>
    <property type="match status" value="2"/>
</dbReference>
<feature type="chain" id="PRO_0000435299" description="DExH-box ATP-dependent RNA helicase DExH12">
    <location>
        <begin position="1"/>
        <end position="2171"/>
    </location>
</feature>
<feature type="domain" description="Helicase ATP-binding 1" evidence="3">
    <location>
        <begin position="514"/>
        <end position="697"/>
    </location>
</feature>
<feature type="domain" description="Helicase C-terminal 1" evidence="4">
    <location>
        <begin position="731"/>
        <end position="941"/>
    </location>
</feature>
<feature type="domain" description="SEC63 1" evidence="2">
    <location>
        <begin position="1006"/>
        <end position="1308"/>
    </location>
</feature>
<feature type="domain" description="Helicase ATP-binding 2" evidence="3">
    <location>
        <begin position="1360"/>
        <end position="1537"/>
    </location>
</feature>
<feature type="domain" description="Helicase C-terminal 2" evidence="4">
    <location>
        <begin position="1574"/>
        <end position="1779"/>
    </location>
</feature>
<feature type="domain" description="SEC63 2" evidence="2">
    <location>
        <begin position="1839"/>
        <end position="2157"/>
    </location>
</feature>
<feature type="region of interest" description="Disordered" evidence="5">
    <location>
        <begin position="24"/>
        <end position="80"/>
    </location>
</feature>
<feature type="region of interest" description="Disordered" evidence="5">
    <location>
        <begin position="218"/>
        <end position="267"/>
    </location>
</feature>
<feature type="region of interest" description="Disordered" evidence="5">
    <location>
        <begin position="383"/>
        <end position="426"/>
    </location>
</feature>
<feature type="short sequence motif" description="DEIH box" evidence="10">
    <location>
        <begin position="639"/>
        <end position="642"/>
    </location>
</feature>
<feature type="short sequence motif" description="DELH box" evidence="10">
    <location>
        <begin position="1479"/>
        <end position="1482"/>
    </location>
</feature>
<feature type="compositionally biased region" description="Basic and acidic residues" evidence="5">
    <location>
        <begin position="31"/>
        <end position="40"/>
    </location>
</feature>
<feature type="compositionally biased region" description="Basic and acidic residues" evidence="5">
    <location>
        <begin position="50"/>
        <end position="80"/>
    </location>
</feature>
<feature type="compositionally biased region" description="Acidic residues" evidence="5">
    <location>
        <begin position="218"/>
        <end position="242"/>
    </location>
</feature>
<feature type="compositionally biased region" description="Basic and acidic residues" evidence="5">
    <location>
        <begin position="383"/>
        <end position="423"/>
    </location>
</feature>
<feature type="binding site" evidence="3">
    <location>
        <begin position="527"/>
        <end position="534"/>
    </location>
    <ligand>
        <name>ATP</name>
        <dbReference type="ChEBI" id="CHEBI:30616"/>
    </ligand>
</feature>
<feature type="binding site" evidence="3">
    <location>
        <begin position="1373"/>
        <end position="1380"/>
    </location>
    <ligand>
        <name>ATP</name>
        <dbReference type="ChEBI" id="CHEBI:30616"/>
    </ligand>
</feature>
<feature type="sequence conflict" description="In Ref. 4; BAD95221." evidence="10" ref="4">
    <original>KVK</original>
    <variation>EVR</variation>
    <location>
        <begin position="2122"/>
        <end position="2124"/>
    </location>
</feature>
<gene>
    <name evidence="9" type="primary">BRR2A</name>
    <name evidence="8" type="synonym">EMB1507</name>
    <name evidence="11" type="ordered locus">At1g20960</name>
    <name evidence="12" type="ORF">F9H16.5</name>
</gene>
<comment type="function">
    <text evidence="1">RNA helicase that plays an essential role in pre-mRNA splicing as component of the U5 snRNP and U4/U6-U5 tri-snRNP complexes. Involved in spliceosome assembly, activation and disassembly.</text>
</comment>
<comment type="catalytic activity">
    <reaction evidence="10">
        <text>ATP + H2O = ADP + phosphate + H(+)</text>
        <dbReference type="Rhea" id="RHEA:13065"/>
        <dbReference type="ChEBI" id="CHEBI:15377"/>
        <dbReference type="ChEBI" id="CHEBI:15378"/>
        <dbReference type="ChEBI" id="CHEBI:30616"/>
        <dbReference type="ChEBI" id="CHEBI:43474"/>
        <dbReference type="ChEBI" id="CHEBI:456216"/>
        <dbReference type="EC" id="3.6.4.13"/>
    </reaction>
</comment>
<comment type="subunit">
    <text evidence="7">Interacts with CLO.</text>
</comment>
<comment type="subcellular location">
    <subcellularLocation>
        <location evidence="10">Nucleus</location>
    </subcellularLocation>
</comment>
<comment type="disruption phenotype">
    <text evidence="6">Embryo defective.</text>
</comment>
<comment type="similarity">
    <text evidence="10">Belongs to the DExH box helicase family.</text>
</comment>
<comment type="sequence caution" evidence="10">
    <conflict type="erroneous initiation">
        <sequence resource="EMBL-CDS" id="AAL31915"/>
    </conflict>
    <text>Truncated N-terminus.</text>
</comment>
<comment type="online information" name="Seed defective Arabidopsis mutants">
    <link uri="http://seedgenes.org/MutantList"/>
</comment>
<protein>
    <recommendedName>
        <fullName evidence="10">DExH-box ATP-dependent RNA helicase DExH12</fullName>
        <ecNumber evidence="10">3.6.4.13</ecNumber>
    </recommendedName>
    <alternativeName>
        <fullName evidence="10">BRR2 homolog A</fullName>
        <shortName evidence="9">AtBRR2A</shortName>
    </alternativeName>
    <alternativeName>
        <fullName evidence="10">Pre-mRNA-splicing helicase BRR2A</fullName>
    </alternativeName>
    <alternativeName>
        <fullName evidence="8">Protein EMBRYO DEFECTIVE 1507</fullName>
    </alternativeName>
</protein>